<name>RECU_STAAR</name>
<evidence type="ECO:0000255" key="1">
    <source>
        <dbReference type="HAMAP-Rule" id="MF_00130"/>
    </source>
</evidence>
<dbReference type="EC" id="3.1.21.10" evidence="1"/>
<dbReference type="EMBL" id="BX571856">
    <property type="protein sequence ID" value="CAG40458.1"/>
    <property type="molecule type" value="Genomic_DNA"/>
</dbReference>
<dbReference type="RefSeq" id="WP_001108885.1">
    <property type="nucleotide sequence ID" value="NC_002952.2"/>
</dbReference>
<dbReference type="SMR" id="Q6GGW0"/>
<dbReference type="KEGG" id="sar:SAR1460"/>
<dbReference type="HOGENOM" id="CLU_096340_0_0_9"/>
<dbReference type="Proteomes" id="UP000000596">
    <property type="component" value="Chromosome"/>
</dbReference>
<dbReference type="GO" id="GO:0005737">
    <property type="term" value="C:cytoplasm"/>
    <property type="evidence" value="ECO:0007669"/>
    <property type="project" value="UniProtKB-SubCell"/>
</dbReference>
<dbReference type="GO" id="GO:0004519">
    <property type="term" value="F:endonuclease activity"/>
    <property type="evidence" value="ECO:0007669"/>
    <property type="project" value="UniProtKB-UniRule"/>
</dbReference>
<dbReference type="GO" id="GO:0000287">
    <property type="term" value="F:magnesium ion binding"/>
    <property type="evidence" value="ECO:0007669"/>
    <property type="project" value="UniProtKB-UniRule"/>
</dbReference>
<dbReference type="GO" id="GO:0003676">
    <property type="term" value="F:nucleic acid binding"/>
    <property type="evidence" value="ECO:0007669"/>
    <property type="project" value="InterPro"/>
</dbReference>
<dbReference type="GO" id="GO:0007059">
    <property type="term" value="P:chromosome segregation"/>
    <property type="evidence" value="ECO:0007669"/>
    <property type="project" value="UniProtKB-UniRule"/>
</dbReference>
<dbReference type="GO" id="GO:0006310">
    <property type="term" value="P:DNA recombination"/>
    <property type="evidence" value="ECO:0007669"/>
    <property type="project" value="UniProtKB-UniRule"/>
</dbReference>
<dbReference type="GO" id="GO:0006281">
    <property type="term" value="P:DNA repair"/>
    <property type="evidence" value="ECO:0007669"/>
    <property type="project" value="UniProtKB-UniRule"/>
</dbReference>
<dbReference type="CDD" id="cd22354">
    <property type="entry name" value="RecU-like"/>
    <property type="match status" value="1"/>
</dbReference>
<dbReference type="Gene3D" id="3.40.1350.10">
    <property type="match status" value="1"/>
</dbReference>
<dbReference type="HAMAP" id="MF_00130">
    <property type="entry name" value="RecU"/>
    <property type="match status" value="1"/>
</dbReference>
<dbReference type="InterPro" id="IPR004612">
    <property type="entry name" value="Resolv_RecU"/>
</dbReference>
<dbReference type="InterPro" id="IPR011335">
    <property type="entry name" value="Restrct_endonuc-II-like"/>
</dbReference>
<dbReference type="InterPro" id="IPR011856">
    <property type="entry name" value="tRNA_endonuc-like_dom_sf"/>
</dbReference>
<dbReference type="NCBIfam" id="NF002581">
    <property type="entry name" value="PRK02234.1-2"/>
    <property type="match status" value="1"/>
</dbReference>
<dbReference type="NCBIfam" id="NF002583">
    <property type="entry name" value="PRK02234.1-4"/>
    <property type="match status" value="1"/>
</dbReference>
<dbReference type="NCBIfam" id="NF002584">
    <property type="entry name" value="PRK02234.1-5"/>
    <property type="match status" value="1"/>
</dbReference>
<dbReference type="NCBIfam" id="TIGR00648">
    <property type="entry name" value="recU"/>
    <property type="match status" value="1"/>
</dbReference>
<dbReference type="Pfam" id="PF03838">
    <property type="entry name" value="RecU"/>
    <property type="match status" value="1"/>
</dbReference>
<dbReference type="PIRSF" id="PIRSF037785">
    <property type="entry name" value="RecU"/>
    <property type="match status" value="1"/>
</dbReference>
<dbReference type="SUPFAM" id="SSF52980">
    <property type="entry name" value="Restriction endonuclease-like"/>
    <property type="match status" value="1"/>
</dbReference>
<sequence length="208" mass="24428">MNYPNGKPYRKNSAIDGGKKTAAFSNIEYGGRGMSLEKDIEHSNAFYLKSDIAVIHKKPTPVQIVNVNYPKRSKAVINEAYFRTPSTTDYNGVYQGYYIDFEAKETKNKTSFPLNNIHDHQVEHMKNAYQQKGIVFLMIRFKTLDEVYLLPYSKFEIFWKRYKDNIKKSITVDEIRKNGYHIPYQYQPRLDYLKAVDKLILDESEDRV</sequence>
<protein>
    <recommendedName>
        <fullName evidence="1">Holliday junction resolvase RecU</fullName>
        <ecNumber evidence="1">3.1.21.10</ecNumber>
    </recommendedName>
    <alternativeName>
        <fullName evidence="1">Recombination protein U homolog</fullName>
    </alternativeName>
</protein>
<accession>Q6GGW0</accession>
<feature type="chain" id="PRO_0000212305" description="Holliday junction resolvase RecU">
    <location>
        <begin position="1"/>
        <end position="208"/>
    </location>
</feature>
<feature type="binding site" evidence="1">
    <location>
        <position position="87"/>
    </location>
    <ligand>
        <name>Mg(2+)</name>
        <dbReference type="ChEBI" id="CHEBI:18420"/>
    </ligand>
</feature>
<feature type="binding site" evidence="1">
    <location>
        <position position="89"/>
    </location>
    <ligand>
        <name>Mg(2+)</name>
        <dbReference type="ChEBI" id="CHEBI:18420"/>
    </ligand>
</feature>
<feature type="binding site" evidence="1">
    <location>
        <position position="102"/>
    </location>
    <ligand>
        <name>Mg(2+)</name>
        <dbReference type="ChEBI" id="CHEBI:18420"/>
    </ligand>
</feature>
<feature type="binding site" evidence="1">
    <location>
        <position position="121"/>
    </location>
    <ligand>
        <name>Mg(2+)</name>
        <dbReference type="ChEBI" id="CHEBI:18420"/>
    </ligand>
</feature>
<feature type="site" description="Transition state stabilizer" evidence="1">
    <location>
        <position position="104"/>
    </location>
</feature>
<keyword id="KW-0963">Cytoplasm</keyword>
<keyword id="KW-0227">DNA damage</keyword>
<keyword id="KW-0233">DNA recombination</keyword>
<keyword id="KW-0234">DNA repair</keyword>
<keyword id="KW-0255">Endonuclease</keyword>
<keyword id="KW-0378">Hydrolase</keyword>
<keyword id="KW-0460">Magnesium</keyword>
<keyword id="KW-0479">Metal-binding</keyword>
<keyword id="KW-0540">Nuclease</keyword>
<proteinExistence type="inferred from homology"/>
<comment type="function">
    <text evidence="1">Endonuclease that resolves Holliday junction intermediates in genetic recombination. Cleaves mobile four-strand junctions by introducing symmetrical nicks in paired strands. Promotes annealing of linear ssDNA with homologous dsDNA. Required for DNA repair, homologous recombination and chromosome segregation.</text>
</comment>
<comment type="catalytic activity">
    <reaction evidence="1">
        <text>Endonucleolytic cleavage at a junction such as a reciprocal single-stranded crossover between two homologous DNA duplexes (Holliday junction).</text>
        <dbReference type="EC" id="3.1.21.10"/>
    </reaction>
</comment>
<comment type="cofactor">
    <cofactor evidence="1">
        <name>Mg(2+)</name>
        <dbReference type="ChEBI" id="CHEBI:18420"/>
    </cofactor>
    <text evidence="1">Binds 1 Mg(2+) ion per subunit.</text>
</comment>
<comment type="subcellular location">
    <subcellularLocation>
        <location evidence="1">Cytoplasm</location>
    </subcellularLocation>
</comment>
<comment type="similarity">
    <text evidence="1">Belongs to the RecU family.</text>
</comment>
<reference key="1">
    <citation type="journal article" date="2004" name="Proc. Natl. Acad. Sci. U.S.A.">
        <title>Complete genomes of two clinical Staphylococcus aureus strains: evidence for the rapid evolution of virulence and drug resistance.</title>
        <authorList>
            <person name="Holden M.T.G."/>
            <person name="Feil E.J."/>
            <person name="Lindsay J.A."/>
            <person name="Peacock S.J."/>
            <person name="Day N.P.J."/>
            <person name="Enright M.C."/>
            <person name="Foster T.J."/>
            <person name="Moore C.E."/>
            <person name="Hurst L."/>
            <person name="Atkin R."/>
            <person name="Barron A."/>
            <person name="Bason N."/>
            <person name="Bentley S.D."/>
            <person name="Chillingworth C."/>
            <person name="Chillingworth T."/>
            <person name="Churcher C."/>
            <person name="Clark L."/>
            <person name="Corton C."/>
            <person name="Cronin A."/>
            <person name="Doggett J."/>
            <person name="Dowd L."/>
            <person name="Feltwell T."/>
            <person name="Hance Z."/>
            <person name="Harris B."/>
            <person name="Hauser H."/>
            <person name="Holroyd S."/>
            <person name="Jagels K."/>
            <person name="James K.D."/>
            <person name="Lennard N."/>
            <person name="Line A."/>
            <person name="Mayes R."/>
            <person name="Moule S."/>
            <person name="Mungall K."/>
            <person name="Ormond D."/>
            <person name="Quail M.A."/>
            <person name="Rabbinowitsch E."/>
            <person name="Rutherford K.M."/>
            <person name="Sanders M."/>
            <person name="Sharp S."/>
            <person name="Simmonds M."/>
            <person name="Stevens K."/>
            <person name="Whitehead S."/>
            <person name="Barrell B.G."/>
            <person name="Spratt B.G."/>
            <person name="Parkhill J."/>
        </authorList>
    </citation>
    <scope>NUCLEOTIDE SEQUENCE [LARGE SCALE GENOMIC DNA]</scope>
    <source>
        <strain>MRSA252</strain>
    </source>
</reference>
<organism>
    <name type="scientific">Staphylococcus aureus (strain MRSA252)</name>
    <dbReference type="NCBI Taxonomy" id="282458"/>
    <lineage>
        <taxon>Bacteria</taxon>
        <taxon>Bacillati</taxon>
        <taxon>Bacillota</taxon>
        <taxon>Bacilli</taxon>
        <taxon>Bacillales</taxon>
        <taxon>Staphylococcaceae</taxon>
        <taxon>Staphylococcus</taxon>
    </lineage>
</organism>
<gene>
    <name evidence="1" type="primary">recU</name>
    <name type="ordered locus">SAR1460</name>
</gene>